<organism>
    <name type="scientific">Hyperthermus butylicus (strain DSM 5456 / JCM 9403 / PLM1-5)</name>
    <dbReference type="NCBI Taxonomy" id="415426"/>
    <lineage>
        <taxon>Archaea</taxon>
        <taxon>Thermoproteota</taxon>
        <taxon>Thermoprotei</taxon>
        <taxon>Desulfurococcales</taxon>
        <taxon>Pyrodictiaceae</taxon>
        <taxon>Hyperthermus</taxon>
    </lineage>
</organism>
<evidence type="ECO:0000255" key="1">
    <source>
        <dbReference type="HAMAP-Rule" id="MF_00700"/>
    </source>
</evidence>
<gene>
    <name evidence="1" type="primary">priS</name>
    <name type="synonym">priA</name>
    <name type="ordered locus">Hbut_1644</name>
</gene>
<proteinExistence type="inferred from homology"/>
<protein>
    <recommendedName>
        <fullName evidence="1">DNA primase small subunit PriS</fullName>
        <ecNumber evidence="1">2.7.7.-</ecNumber>
    </recommendedName>
</protein>
<accession>A2BN97</accession>
<reference key="1">
    <citation type="journal article" date="2007" name="Archaea">
        <title>The genome of Hyperthermus butylicus: a sulfur-reducing, peptide fermenting, neutrophilic Crenarchaeote growing up to 108 degrees C.</title>
        <authorList>
            <person name="Bruegger K."/>
            <person name="Chen L."/>
            <person name="Stark M."/>
            <person name="Zibat A."/>
            <person name="Redder P."/>
            <person name="Ruepp A."/>
            <person name="Awayez M."/>
            <person name="She Q."/>
            <person name="Garrett R.A."/>
            <person name="Klenk H.-P."/>
        </authorList>
    </citation>
    <scope>NUCLEOTIDE SEQUENCE [LARGE SCALE GENOMIC DNA]</scope>
    <source>
        <strain>DSM 5456 / JCM 9403 / PLM1-5</strain>
    </source>
</reference>
<dbReference type="EC" id="2.7.7.-" evidence="1"/>
<dbReference type="EMBL" id="CP000493">
    <property type="protein sequence ID" value="ABM81458.1"/>
    <property type="molecule type" value="Genomic_DNA"/>
</dbReference>
<dbReference type="RefSeq" id="WP_011822776.1">
    <property type="nucleotide sequence ID" value="NC_008818.1"/>
</dbReference>
<dbReference type="SMR" id="A2BN97"/>
<dbReference type="STRING" id="415426.Hbut_1644"/>
<dbReference type="EnsemblBacteria" id="ABM81458">
    <property type="protein sequence ID" value="ABM81458"/>
    <property type="gene ID" value="Hbut_1644"/>
</dbReference>
<dbReference type="GeneID" id="25393344"/>
<dbReference type="KEGG" id="hbu:Hbut_1644"/>
<dbReference type="eggNOG" id="arCOG04110">
    <property type="taxonomic scope" value="Archaea"/>
</dbReference>
<dbReference type="HOGENOM" id="CLU_056123_1_0_2"/>
<dbReference type="OrthoDB" id="31125at2157"/>
<dbReference type="Proteomes" id="UP000002593">
    <property type="component" value="Chromosome"/>
</dbReference>
<dbReference type="GO" id="GO:0000428">
    <property type="term" value="C:DNA-directed RNA polymerase complex"/>
    <property type="evidence" value="ECO:0007669"/>
    <property type="project" value="UniProtKB-KW"/>
</dbReference>
<dbReference type="GO" id="GO:1990077">
    <property type="term" value="C:primosome complex"/>
    <property type="evidence" value="ECO:0007669"/>
    <property type="project" value="UniProtKB-KW"/>
</dbReference>
<dbReference type="GO" id="GO:0003899">
    <property type="term" value="F:DNA-directed RNA polymerase activity"/>
    <property type="evidence" value="ECO:0007669"/>
    <property type="project" value="InterPro"/>
</dbReference>
<dbReference type="GO" id="GO:0046872">
    <property type="term" value="F:metal ion binding"/>
    <property type="evidence" value="ECO:0007669"/>
    <property type="project" value="UniProtKB-KW"/>
</dbReference>
<dbReference type="GO" id="GO:0006269">
    <property type="term" value="P:DNA replication, synthesis of primer"/>
    <property type="evidence" value="ECO:0007669"/>
    <property type="project" value="UniProtKB-UniRule"/>
</dbReference>
<dbReference type="CDD" id="cd04860">
    <property type="entry name" value="AE_Prim_S"/>
    <property type="match status" value="1"/>
</dbReference>
<dbReference type="Gene3D" id="3.90.920.10">
    <property type="entry name" value="DNA primase, PRIM domain"/>
    <property type="match status" value="1"/>
</dbReference>
<dbReference type="HAMAP" id="MF_00700">
    <property type="entry name" value="DNA_primase_sml_arc"/>
    <property type="match status" value="1"/>
</dbReference>
<dbReference type="InterPro" id="IPR002755">
    <property type="entry name" value="DNA_primase_S"/>
</dbReference>
<dbReference type="InterPro" id="IPR014052">
    <property type="entry name" value="DNA_primase_ssu_euk/arc"/>
</dbReference>
<dbReference type="InterPro" id="IPR023639">
    <property type="entry name" value="DNA_primase_ssu_PriS"/>
</dbReference>
<dbReference type="PANTHER" id="PTHR10536">
    <property type="entry name" value="DNA PRIMASE SMALL SUBUNIT"/>
    <property type="match status" value="1"/>
</dbReference>
<dbReference type="Pfam" id="PF01896">
    <property type="entry name" value="DNA_primase_S"/>
    <property type="match status" value="1"/>
</dbReference>
<dbReference type="SUPFAM" id="SSF56747">
    <property type="entry name" value="Prim-pol domain"/>
    <property type="match status" value="1"/>
</dbReference>
<keyword id="KW-0235">DNA replication</keyword>
<keyword id="KW-0240">DNA-directed RNA polymerase</keyword>
<keyword id="KW-0460">Magnesium</keyword>
<keyword id="KW-0464">Manganese</keyword>
<keyword id="KW-0479">Metal-binding</keyword>
<keyword id="KW-0548">Nucleotidyltransferase</keyword>
<keyword id="KW-0639">Primosome</keyword>
<keyword id="KW-1185">Reference proteome</keyword>
<keyword id="KW-0804">Transcription</keyword>
<keyword id="KW-0808">Transferase</keyword>
<feature type="chain" id="PRO_1000045499" description="DNA primase small subunit PriS">
    <location>
        <begin position="1"/>
        <end position="380"/>
    </location>
</feature>
<feature type="active site" evidence="1">
    <location>
        <position position="101"/>
    </location>
</feature>
<feature type="active site" evidence="1">
    <location>
        <position position="103"/>
    </location>
</feature>
<feature type="active site" evidence="1">
    <location>
        <position position="282"/>
    </location>
</feature>
<sequence length="380" mass="42814">MPRSQDPVMRTRRFLEHLTRKYYERARVKLPGDFSLREFALQTWTGKSYLRHLSFASTEAVHRLLVEKAPRHFYYSSARYDQPGADDMDAKGWRSADLTFDIDADHLPECSGSIVEVDGGIEGKTSFIEEALCMRAAALRAQILYDILVYELGFDKSRIAIEFSGHRGFHVTVYLDDFDDYAKAGSDVRREIVNYVKALGLRADVLEPWTMLQVRRGKPIPIPPNVQLAGARGRVARIIRRLALRDGAIDIVKAVEGPSTTYSEELREYEDKARQLIGVEIDEQVSVDVKRLIRVPYSINGKTGLLVKPVTVDELDEFVVDETLSPFAREPPVRIRVVTSLPSSVTILGNRLKLREGDSPRLPAPVAVYLMAKGVAVLAQ</sequence>
<comment type="function">
    <text evidence="1">Catalytic subunit of DNA primase, an RNA polymerase that catalyzes the synthesis of short RNA molecules used as primers for DNA polymerase during DNA replication. The small subunit contains the primase catalytic core and has DNA synthesis activity on its own. Binding to the large subunit stabilizes and modulates the activity, increasing the rate of DNA synthesis while decreasing the length of the DNA fragments, and conferring RNA synthesis capability. The DNA polymerase activity may enable DNA primase to also catalyze primer extension after primer synthesis. May also play a role in DNA repair.</text>
</comment>
<comment type="cofactor">
    <cofactor evidence="1">
        <name>Mg(2+)</name>
        <dbReference type="ChEBI" id="CHEBI:18420"/>
    </cofactor>
    <cofactor evidence="1">
        <name>Mn(2+)</name>
        <dbReference type="ChEBI" id="CHEBI:29035"/>
    </cofactor>
</comment>
<comment type="subunit">
    <text evidence="1">Heterodimer of a small subunit (PriS) and a large subunit (PriL).</text>
</comment>
<comment type="similarity">
    <text evidence="1">Belongs to the eukaryotic-type primase small subunit family.</text>
</comment>
<name>PRIS_HYPBU</name>